<dbReference type="EMBL" id="Z71669">
    <property type="protein sequence ID" value="CAA96335.1"/>
    <property type="molecule type" value="Genomic_DNA"/>
</dbReference>
<dbReference type="EMBL" id="BK006947">
    <property type="protein sequence ID" value="DAA10595.1"/>
    <property type="molecule type" value="Genomic_DNA"/>
</dbReference>
<dbReference type="PIR" id="S63385">
    <property type="entry name" value="S63385"/>
</dbReference>
<dbReference type="RefSeq" id="NP_014452.1">
    <property type="nucleotide sequence ID" value="NM_001183231.1"/>
</dbReference>
<dbReference type="BioGRID" id="35879">
    <property type="interactions" value="200"/>
</dbReference>
<dbReference type="DIP" id="DIP-6417N"/>
<dbReference type="FunCoup" id="P53743">
    <property type="interactions" value="1119"/>
</dbReference>
<dbReference type="IntAct" id="P53743">
    <property type="interactions" value="74"/>
</dbReference>
<dbReference type="MINT" id="P53743"/>
<dbReference type="STRING" id="4932.YNR054C"/>
<dbReference type="iPTMnet" id="P53743"/>
<dbReference type="PaxDb" id="4932-YNR054C"/>
<dbReference type="PeptideAtlas" id="P53743"/>
<dbReference type="EnsemblFungi" id="YNR054C_mRNA">
    <property type="protein sequence ID" value="YNR054C"/>
    <property type="gene ID" value="YNR054C"/>
</dbReference>
<dbReference type="GeneID" id="855790"/>
<dbReference type="KEGG" id="sce:YNR054C"/>
<dbReference type="AGR" id="SGD:S000005337"/>
<dbReference type="SGD" id="S000005337">
    <property type="gene designation" value="ESF2"/>
</dbReference>
<dbReference type="VEuPathDB" id="FungiDB:YNR054C"/>
<dbReference type="eggNOG" id="KOG3152">
    <property type="taxonomic scope" value="Eukaryota"/>
</dbReference>
<dbReference type="GeneTree" id="ENSGT00390000002062"/>
<dbReference type="HOGENOM" id="CLU_054086_0_0_1"/>
<dbReference type="InParanoid" id="P53743"/>
<dbReference type="OMA" id="TRKHNDF"/>
<dbReference type="OrthoDB" id="287393at2759"/>
<dbReference type="BioCyc" id="YEAST:G3O-33360-MONOMER"/>
<dbReference type="BioGRID-ORCS" id="855790">
    <property type="hits" value="2 hits in 10 CRISPR screens"/>
</dbReference>
<dbReference type="CD-CODE" id="BDAE0F88">
    <property type="entry name" value="Nucleolus"/>
</dbReference>
<dbReference type="PRO" id="PR:P53743"/>
<dbReference type="Proteomes" id="UP000002311">
    <property type="component" value="Chromosome XIV"/>
</dbReference>
<dbReference type="RNAct" id="P53743">
    <property type="molecule type" value="protein"/>
</dbReference>
<dbReference type="GO" id="GO:0005737">
    <property type="term" value="C:cytoplasm"/>
    <property type="evidence" value="ECO:0007005"/>
    <property type="project" value="SGD"/>
</dbReference>
<dbReference type="GO" id="GO:0005730">
    <property type="term" value="C:nucleolus"/>
    <property type="evidence" value="ECO:0000314"/>
    <property type="project" value="SGD"/>
</dbReference>
<dbReference type="GO" id="GO:0032040">
    <property type="term" value="C:small-subunit processome"/>
    <property type="evidence" value="ECO:0000353"/>
    <property type="project" value="ComplexPortal"/>
</dbReference>
<dbReference type="GO" id="GO:0001671">
    <property type="term" value="F:ATPase activator activity"/>
    <property type="evidence" value="ECO:0000314"/>
    <property type="project" value="SGD"/>
</dbReference>
<dbReference type="GO" id="GO:0003723">
    <property type="term" value="F:RNA binding"/>
    <property type="evidence" value="ECO:0000314"/>
    <property type="project" value="SGD"/>
</dbReference>
<dbReference type="GO" id="GO:0000480">
    <property type="term" value="P:endonucleolytic cleavage in 5'-ETS of tricistronic rRNA transcript (SSU-rRNA, 5.8S rRNA, LSU-rRNA)"/>
    <property type="evidence" value="ECO:0000315"/>
    <property type="project" value="SGD"/>
</dbReference>
<dbReference type="GO" id="GO:0000447">
    <property type="term" value="P:endonucleolytic cleavage in ITS1 to separate SSU-rRNA from 5.8S rRNA and LSU-rRNA from tricistronic rRNA transcript (SSU-rRNA, 5.8S rRNA, LSU-rRNA)"/>
    <property type="evidence" value="ECO:0000315"/>
    <property type="project" value="SGD"/>
</dbReference>
<dbReference type="GO" id="GO:0000472">
    <property type="term" value="P:endonucleolytic cleavage to generate mature 5'-end of SSU-rRNA from (SSU-rRNA, 5.8S rRNA, LSU-rRNA)"/>
    <property type="evidence" value="ECO:0000315"/>
    <property type="project" value="SGD"/>
</dbReference>
<dbReference type="GO" id="GO:0030490">
    <property type="term" value="P:maturation of SSU-rRNA"/>
    <property type="evidence" value="ECO:0000303"/>
    <property type="project" value="ComplexPortal"/>
</dbReference>
<dbReference type="GO" id="GO:0034462">
    <property type="term" value="P:small-subunit processome assembly"/>
    <property type="evidence" value="ECO:0000315"/>
    <property type="project" value="SGD"/>
</dbReference>
<dbReference type="CDD" id="cd12263">
    <property type="entry name" value="RRM_ABT1_like"/>
    <property type="match status" value="1"/>
</dbReference>
<dbReference type="FunFam" id="3.30.70.330:FF:000825">
    <property type="entry name" value="Pre-rRNA-processing protein ESF2"/>
    <property type="match status" value="1"/>
</dbReference>
<dbReference type="Gene3D" id="3.30.70.330">
    <property type="match status" value="1"/>
</dbReference>
<dbReference type="InterPro" id="IPR039119">
    <property type="entry name" value="ABT1/Esf2"/>
</dbReference>
<dbReference type="InterPro" id="IPR034353">
    <property type="entry name" value="ABT1/ESF2_RRM"/>
</dbReference>
<dbReference type="InterPro" id="IPR012677">
    <property type="entry name" value="Nucleotide-bd_a/b_plait_sf"/>
</dbReference>
<dbReference type="InterPro" id="IPR035979">
    <property type="entry name" value="RBD_domain_sf"/>
</dbReference>
<dbReference type="PANTHER" id="PTHR12311">
    <property type="entry name" value="ACTIVATOR OF BASAL TRANSCRIPTION 1"/>
    <property type="match status" value="1"/>
</dbReference>
<dbReference type="PANTHER" id="PTHR12311:SF7">
    <property type="entry name" value="ACTIVATOR OF BASAL TRANSCRIPTION 1"/>
    <property type="match status" value="1"/>
</dbReference>
<dbReference type="SUPFAM" id="SSF54928">
    <property type="entry name" value="RNA-binding domain, RBD"/>
    <property type="match status" value="1"/>
</dbReference>
<protein>
    <recommendedName>
        <fullName>Pre-rRNA-processing protein ESF2</fullName>
    </recommendedName>
    <alternativeName>
        <fullName>18S rRNA factor 2</fullName>
    </alternativeName>
</protein>
<reference key="1">
    <citation type="journal article" date="1997" name="Nature">
        <title>The nucleotide sequence of Saccharomyces cerevisiae chromosome XIV and its evolutionary implications.</title>
        <authorList>
            <person name="Philippsen P."/>
            <person name="Kleine K."/>
            <person name="Poehlmann R."/>
            <person name="Duesterhoeft A."/>
            <person name="Hamberg K."/>
            <person name="Hegemann J.H."/>
            <person name="Obermaier B."/>
            <person name="Urrestarazu L.A."/>
            <person name="Aert R."/>
            <person name="Albermann K."/>
            <person name="Altmann R."/>
            <person name="Andre B."/>
            <person name="Baladron V."/>
            <person name="Ballesta J.P.G."/>
            <person name="Becam A.-M."/>
            <person name="Beinhauer J.D."/>
            <person name="Boskovic J."/>
            <person name="Buitrago M.J."/>
            <person name="Bussereau F."/>
            <person name="Coster F."/>
            <person name="Crouzet M."/>
            <person name="D'Angelo M."/>
            <person name="Dal Pero F."/>
            <person name="De Antoni A."/>
            <person name="del Rey F."/>
            <person name="Doignon F."/>
            <person name="Domdey H."/>
            <person name="Dubois E."/>
            <person name="Fiedler T.A."/>
            <person name="Fleig U."/>
            <person name="Floeth M."/>
            <person name="Fritz C."/>
            <person name="Gaillardin C."/>
            <person name="Garcia-Cantalejo J.M."/>
            <person name="Glansdorff N."/>
            <person name="Goffeau A."/>
            <person name="Gueldener U."/>
            <person name="Herbert C.J."/>
            <person name="Heumann K."/>
            <person name="Heuss-Neitzel D."/>
            <person name="Hilbert H."/>
            <person name="Hinni K."/>
            <person name="Iraqui Houssaini I."/>
            <person name="Jacquet M."/>
            <person name="Jimenez A."/>
            <person name="Jonniaux J.-L."/>
            <person name="Karpfinger-Hartl L."/>
            <person name="Lanfranchi G."/>
            <person name="Lepingle A."/>
            <person name="Levesque H."/>
            <person name="Lyck R."/>
            <person name="Maftahi M."/>
            <person name="Mallet L."/>
            <person name="Maurer C.T.C."/>
            <person name="Messenguy F."/>
            <person name="Mewes H.-W."/>
            <person name="Moestl D."/>
            <person name="Nasr F."/>
            <person name="Nicaud J.-M."/>
            <person name="Niedenthal R.K."/>
            <person name="Pandolfo D."/>
            <person name="Pierard A."/>
            <person name="Piravandi E."/>
            <person name="Planta R.J."/>
            <person name="Pohl T.M."/>
            <person name="Purnelle B."/>
            <person name="Rebischung C."/>
            <person name="Remacha M.A."/>
            <person name="Revuelta J.L."/>
            <person name="Rinke M."/>
            <person name="Saiz J.E."/>
            <person name="Sartorello F."/>
            <person name="Scherens B."/>
            <person name="Sen-Gupta M."/>
            <person name="Soler-Mira A."/>
            <person name="Urbanus J.H.M."/>
            <person name="Valle G."/>
            <person name="Van Dyck L."/>
            <person name="Verhasselt P."/>
            <person name="Vierendeels F."/>
            <person name="Vissers S."/>
            <person name="Voet M."/>
            <person name="Volckaert G."/>
            <person name="Wach A."/>
            <person name="Wambutt R."/>
            <person name="Wedler H."/>
            <person name="Zollner A."/>
            <person name="Hani J."/>
        </authorList>
    </citation>
    <scope>NUCLEOTIDE SEQUENCE [LARGE SCALE GENOMIC DNA]</scope>
    <source>
        <strain>ATCC 204508 / S288c</strain>
    </source>
</reference>
<reference key="2">
    <citation type="journal article" date="2014" name="G3 (Bethesda)">
        <title>The reference genome sequence of Saccharomyces cerevisiae: Then and now.</title>
        <authorList>
            <person name="Engel S.R."/>
            <person name="Dietrich F.S."/>
            <person name="Fisk D.G."/>
            <person name="Binkley G."/>
            <person name="Balakrishnan R."/>
            <person name="Costanzo M.C."/>
            <person name="Dwight S.S."/>
            <person name="Hitz B.C."/>
            <person name="Karra K."/>
            <person name="Nash R.S."/>
            <person name="Weng S."/>
            <person name="Wong E.D."/>
            <person name="Lloyd P."/>
            <person name="Skrzypek M.S."/>
            <person name="Miyasato S.R."/>
            <person name="Simison M."/>
            <person name="Cherry J.M."/>
        </authorList>
    </citation>
    <scope>GENOME REANNOTATION</scope>
    <source>
        <strain>ATCC 204508 / S288c</strain>
    </source>
</reference>
<reference key="3">
    <citation type="journal article" date="2003" name="Nature">
        <title>Global analysis of protein localization in budding yeast.</title>
        <authorList>
            <person name="Huh W.-K."/>
            <person name="Falvo J.V."/>
            <person name="Gerke L.C."/>
            <person name="Carroll A.S."/>
            <person name="Howson R.W."/>
            <person name="Weissman J.S."/>
            <person name="O'Shea E.K."/>
        </authorList>
    </citation>
    <scope>SUBCELLULAR LOCATION [LARGE SCALE ANALYSIS]</scope>
</reference>
<reference key="4">
    <citation type="journal article" date="2003" name="Nature">
        <title>Global analysis of protein expression in yeast.</title>
        <authorList>
            <person name="Ghaemmaghami S."/>
            <person name="Huh W.-K."/>
            <person name="Bower K."/>
            <person name="Howson R.W."/>
            <person name="Belle A."/>
            <person name="Dephoure N."/>
            <person name="O'Shea E.K."/>
            <person name="Weissman J.S."/>
        </authorList>
    </citation>
    <scope>LEVEL OF PROTEIN EXPRESSION [LARGE SCALE ANALYSIS]</scope>
</reference>
<reference key="5">
    <citation type="journal article" date="2005" name="Mol. Cell. Biol.">
        <title>Esf2p, a U3-associated factor required for small-subunit processome assembly and compaction.</title>
        <authorList>
            <person name="Hoang T."/>
            <person name="Peng W.-T."/>
            <person name="Vanrobays E."/>
            <person name="Krogan N."/>
            <person name="Hiley S."/>
            <person name="Beyer A.L."/>
            <person name="Osheim Y.N."/>
            <person name="Greenblatt J."/>
            <person name="Hughes T.R."/>
            <person name="Lafontaine D.L.J."/>
        </authorList>
    </citation>
    <scope>FUNCTION</scope>
    <scope>IDENTIFICATION IN A 90S PRERIBOSOME</scope>
</reference>
<reference key="6">
    <citation type="journal article" date="2006" name="Nucleic Acids Res.">
        <title>The nucleolar protein Esf2 interacts directly with the DExD/H box RNA helicase, Dbp8, to stimulate ATP hydrolysis.</title>
        <authorList>
            <person name="Granneman S."/>
            <person name="Lin C."/>
            <person name="Champion E.A."/>
            <person name="Nandineni M.R."/>
            <person name="Zorca C."/>
            <person name="Baserga S.J."/>
        </authorList>
    </citation>
    <scope>FUNCTION</scope>
    <scope>INTERACTION WITH DBP8</scope>
    <scope>RRNA-BINDING</scope>
</reference>
<reference key="7">
    <citation type="journal article" date="2007" name="J. Proteome Res.">
        <title>Large-scale phosphorylation analysis of alpha-factor-arrested Saccharomyces cerevisiae.</title>
        <authorList>
            <person name="Li X."/>
            <person name="Gerber S.A."/>
            <person name="Rudner A.D."/>
            <person name="Beausoleil S.A."/>
            <person name="Haas W."/>
            <person name="Villen J."/>
            <person name="Elias J.E."/>
            <person name="Gygi S.P."/>
        </authorList>
    </citation>
    <scope>PHOSPHORYLATION [LARGE SCALE ANALYSIS] AT SER-7; SER-13 AND SER-14</scope>
    <scope>IDENTIFICATION BY MASS SPECTROMETRY [LARGE SCALE ANALYSIS]</scope>
    <source>
        <strain>ADR376</strain>
    </source>
</reference>
<reference key="8">
    <citation type="journal article" date="2009" name="Science">
        <title>Global analysis of Cdk1 substrate phosphorylation sites provides insights into evolution.</title>
        <authorList>
            <person name="Holt L.J."/>
            <person name="Tuch B.B."/>
            <person name="Villen J."/>
            <person name="Johnson A.D."/>
            <person name="Gygi S.P."/>
            <person name="Morgan D.O."/>
        </authorList>
    </citation>
    <scope>PHOSPHORYLATION [LARGE SCALE ANALYSIS] AT SER-7; SER-13 AND SER-14</scope>
    <scope>IDENTIFICATION BY MASS SPECTROMETRY [LARGE SCALE ANALYSIS]</scope>
</reference>
<feature type="chain" id="PRO_0000203480" description="Pre-rRNA-processing protein ESF2">
    <location>
        <begin position="1"/>
        <end position="316"/>
    </location>
</feature>
<feature type="domain" description="RRM">
    <location>
        <begin position="114"/>
        <end position="204"/>
    </location>
</feature>
<feature type="region of interest" description="Disordered" evidence="1">
    <location>
        <begin position="1"/>
        <end position="91"/>
    </location>
</feature>
<feature type="region of interest" description="Disordered" evidence="1">
    <location>
        <begin position="261"/>
        <end position="316"/>
    </location>
</feature>
<feature type="compositionally biased region" description="Acidic residues" evidence="1">
    <location>
        <begin position="8"/>
        <end position="18"/>
    </location>
</feature>
<feature type="compositionally biased region" description="Basic and acidic residues" evidence="1">
    <location>
        <begin position="32"/>
        <end position="44"/>
    </location>
</feature>
<feature type="compositionally biased region" description="Acidic residues" evidence="1">
    <location>
        <begin position="45"/>
        <end position="58"/>
    </location>
</feature>
<feature type="compositionally biased region" description="Basic and acidic residues" evidence="1">
    <location>
        <begin position="59"/>
        <end position="78"/>
    </location>
</feature>
<feature type="compositionally biased region" description="Basic and acidic residues" evidence="1">
    <location>
        <begin position="268"/>
        <end position="289"/>
    </location>
</feature>
<feature type="compositionally biased region" description="Polar residues" evidence="1">
    <location>
        <begin position="290"/>
        <end position="316"/>
    </location>
</feature>
<feature type="modified residue" description="Phosphoserine" evidence="7 8">
    <location>
        <position position="7"/>
    </location>
</feature>
<feature type="modified residue" description="Phosphoserine" evidence="7 8">
    <location>
        <position position="13"/>
    </location>
</feature>
<feature type="modified residue" description="Phosphoserine" evidence="7 8">
    <location>
        <position position="14"/>
    </location>
</feature>
<keyword id="KW-0539">Nucleus</keyword>
<keyword id="KW-0597">Phosphoprotein</keyword>
<keyword id="KW-1185">Reference proteome</keyword>
<keyword id="KW-0690">Ribosome biogenesis</keyword>
<keyword id="KW-0694">RNA-binding</keyword>
<keyword id="KW-0698">rRNA processing</keyword>
<proteinExistence type="evidence at protein level"/>
<gene>
    <name type="primary">ESF2</name>
    <name type="synonym">ABT1</name>
    <name type="ordered locus">YNR054C</name>
    <name type="ORF">N3491</name>
</gene>
<name>ESF2_YEAST</name>
<comment type="function">
    <text evidence="4 5">Involved in the small subunit (SSU) processome assembly and function, and in the 18S rRNA synthesis. Required for the early cleavages at sites A0, A1 and A2. Stimulates DBP8 RNA helicase ATPase activity.</text>
</comment>
<comment type="subunit">
    <text evidence="4 5">Component of the 90S pre-ribosomes. Interacts directly with DBP8.</text>
</comment>
<comment type="interaction">
    <interactant intactId="EBI-28537">
        <id>P53743</id>
    </interactant>
    <interactant intactId="EBI-5633">
        <id>P38719</id>
        <label>DBP8</label>
    </interactant>
    <organismsDiffer>false</organismsDiffer>
    <experiments>5</experiments>
</comment>
<comment type="interaction">
    <interactant intactId="EBI-28537">
        <id>P53743</id>
    </interactant>
    <interactant intactId="EBI-34121">
        <id>Q06344</id>
        <label>ESF1</label>
    </interactant>
    <organismsDiffer>false</organismsDiffer>
    <experiments>7</experiments>
</comment>
<comment type="interaction">
    <interactant intactId="EBI-28537">
        <id>P53743</id>
    </interactant>
    <interactant intactId="EBI-8170">
        <id>Q03532</id>
        <label>HAS1</label>
    </interactant>
    <organismsDiffer>false</organismsDiffer>
    <experiments>2</experiments>
</comment>
<comment type="interaction">
    <interactant intactId="EBI-28537">
        <id>P53743</id>
    </interactant>
    <interactant intactId="EBI-5612">
        <id>P20448</id>
        <label>HCA4</label>
    </interactant>
    <organismsDiffer>false</organismsDiffer>
    <experiments>3</experiments>
</comment>
<comment type="subcellular location">
    <subcellularLocation>
        <location evidence="2">Nucleus</location>
        <location evidence="2">Nucleolus</location>
    </subcellularLocation>
</comment>
<comment type="miscellaneous">
    <text evidence="3">Present with 12800 molecules/cell in log phase SD medium.</text>
</comment>
<comment type="similarity">
    <text evidence="6">Belongs to the ESF2/ABP1 family.</text>
</comment>
<sequence>MSEKVNSDFEDFSSDEETDQHNVLIQTKKKISSKDDIFSKKVEDIESENESDIEEEQKQEEKEDVEQPDKENGEKLDREVEEQASSTTSLDLKTEKLRQLVKSKAAKKSKHKTGVVYFSSIPPYMKPAKMRQILTRFGEVDRLFLKKEDDQKYKQRVKGGGNKKNKYEEGWAEFIRKRDAKLCAETLNGNIIGGKKGTFYHDDILNVKYLPGFKWADLTEQIARENDIRQAKLEMEISQANKLNAEFIRNVEQSKMIQNIKNSRKRAGKEGESADSHPHREFKQRRVETSRANAPSDIKQQSSGSKDLGNVLTNLL</sequence>
<accession>P53743</accession>
<accession>D6W1M9</accession>
<organism>
    <name type="scientific">Saccharomyces cerevisiae (strain ATCC 204508 / S288c)</name>
    <name type="common">Baker's yeast</name>
    <dbReference type="NCBI Taxonomy" id="559292"/>
    <lineage>
        <taxon>Eukaryota</taxon>
        <taxon>Fungi</taxon>
        <taxon>Dikarya</taxon>
        <taxon>Ascomycota</taxon>
        <taxon>Saccharomycotina</taxon>
        <taxon>Saccharomycetes</taxon>
        <taxon>Saccharomycetales</taxon>
        <taxon>Saccharomycetaceae</taxon>
        <taxon>Saccharomyces</taxon>
    </lineage>
</organism>
<evidence type="ECO:0000256" key="1">
    <source>
        <dbReference type="SAM" id="MobiDB-lite"/>
    </source>
</evidence>
<evidence type="ECO:0000269" key="2">
    <source>
    </source>
</evidence>
<evidence type="ECO:0000269" key="3">
    <source>
    </source>
</evidence>
<evidence type="ECO:0000269" key="4">
    <source>
    </source>
</evidence>
<evidence type="ECO:0000269" key="5">
    <source>
    </source>
</evidence>
<evidence type="ECO:0000305" key="6"/>
<evidence type="ECO:0007744" key="7">
    <source>
    </source>
</evidence>
<evidence type="ECO:0007744" key="8">
    <source>
    </source>
</evidence>